<reference key="1">
    <citation type="journal article" date="2003" name="DNA Res.">
        <title>Complete nucleotide sequence of the chloroplast genome from a leptosporangiate fern, Adiantum capillus-veneris L.</title>
        <authorList>
            <person name="Wolf P.G."/>
            <person name="Rowe C.A."/>
            <person name="Sinclair R.B."/>
            <person name="Hasebe M."/>
        </authorList>
    </citation>
    <scope>NUCLEOTIDE SEQUENCE [LARGE SCALE GENOMIC DNA]</scope>
</reference>
<reference key="2">
    <citation type="journal article" date="2004" name="Gene">
        <title>High levels of RNA editing in a vascular plant chloroplast genome: analysis of transcripts from the fern Adiantum capillus-veneris.</title>
        <authorList>
            <person name="Wolf P.G."/>
            <person name="Rowe C.A."/>
            <person name="Hasebe M."/>
        </authorList>
    </citation>
    <scope>NUCLEOTIDE SEQUENCE [GENOMIC DNA]</scope>
    <scope>ABSENCE OF RNA EDITING</scope>
    <source>
        <tissue>Frond</tissue>
    </source>
</reference>
<sequence>MNSRPTWIQVEFIRGSRTFVNLCWACILVCGATGFLLVGFSSCIGKDLIPILSSKQIAFIPQGLVMCFYGIAGLFLGLYLCCTVFWNVGSGYNYFDKREGISSIFRWGFPGKNRRIHIRLILGDIEAVGLRSQEGLFPSRILYLKVRGRQSIPLTRIGENSTPEYMEEKAAELARFLRISIEGF</sequence>
<protein>
    <recommendedName>
        <fullName evidence="1">Photosystem I assembly protein Ycf4</fullName>
    </recommendedName>
</protein>
<geneLocation type="chloroplast"/>
<name>YCF4_ADICA</name>
<accession>Q85FL1</accession>
<proteinExistence type="evidence at transcript level"/>
<comment type="function">
    <text evidence="1">Seems to be required for the assembly of the photosystem I complex.</text>
</comment>
<comment type="subcellular location">
    <subcellularLocation>
        <location evidence="1">Plastid</location>
        <location evidence="1">Chloroplast thylakoid membrane</location>
        <topology evidence="1">Multi-pass membrane protein</topology>
    </subcellularLocation>
</comment>
<comment type="similarity">
    <text evidence="1">Belongs to the Ycf4 family.</text>
</comment>
<gene>
    <name evidence="1" type="primary">ycf4</name>
</gene>
<organism>
    <name type="scientific">Adiantum capillus-veneris</name>
    <name type="common">Maidenhair fern</name>
    <dbReference type="NCBI Taxonomy" id="13818"/>
    <lineage>
        <taxon>Eukaryota</taxon>
        <taxon>Viridiplantae</taxon>
        <taxon>Streptophyta</taxon>
        <taxon>Embryophyta</taxon>
        <taxon>Tracheophyta</taxon>
        <taxon>Polypodiopsida</taxon>
        <taxon>Polypodiidae</taxon>
        <taxon>Polypodiales</taxon>
        <taxon>Pteridineae</taxon>
        <taxon>Pteridaceae</taxon>
        <taxon>Vittarioideae</taxon>
        <taxon>Adiantum</taxon>
    </lineage>
</organism>
<feature type="chain" id="PRO_0000217590" description="Photosystem I assembly protein Ycf4">
    <location>
        <begin position="1"/>
        <end position="184"/>
    </location>
</feature>
<feature type="transmembrane region" description="Helical" evidence="1">
    <location>
        <begin position="20"/>
        <end position="42"/>
    </location>
</feature>
<feature type="transmembrane region" description="Helical" evidence="1">
    <location>
        <begin position="57"/>
        <end position="79"/>
    </location>
</feature>
<dbReference type="EMBL" id="AY178864">
    <property type="protein sequence ID" value="AAP29402.1"/>
    <property type="molecule type" value="Genomic_DNA"/>
</dbReference>
<dbReference type="RefSeq" id="NP_848071.1">
    <property type="nucleotide sequence ID" value="NC_004766.1"/>
</dbReference>
<dbReference type="GeneID" id="807377"/>
<dbReference type="GO" id="GO:0009535">
    <property type="term" value="C:chloroplast thylakoid membrane"/>
    <property type="evidence" value="ECO:0007669"/>
    <property type="project" value="UniProtKB-SubCell"/>
</dbReference>
<dbReference type="GO" id="GO:0009522">
    <property type="term" value="C:photosystem I"/>
    <property type="evidence" value="ECO:0007669"/>
    <property type="project" value="InterPro"/>
</dbReference>
<dbReference type="GO" id="GO:0015979">
    <property type="term" value="P:photosynthesis"/>
    <property type="evidence" value="ECO:0007669"/>
    <property type="project" value="UniProtKB-UniRule"/>
</dbReference>
<dbReference type="HAMAP" id="MF_00437">
    <property type="entry name" value="Ycf4"/>
    <property type="match status" value="1"/>
</dbReference>
<dbReference type="InterPro" id="IPR003359">
    <property type="entry name" value="PSI_Ycf4_assembly"/>
</dbReference>
<dbReference type="PANTHER" id="PTHR33288">
    <property type="match status" value="1"/>
</dbReference>
<dbReference type="PANTHER" id="PTHR33288:SF4">
    <property type="entry name" value="PHOTOSYSTEM I ASSEMBLY PROTEIN YCF4"/>
    <property type="match status" value="1"/>
</dbReference>
<dbReference type="Pfam" id="PF02392">
    <property type="entry name" value="Ycf4"/>
    <property type="match status" value="1"/>
</dbReference>
<keyword id="KW-0150">Chloroplast</keyword>
<keyword id="KW-0472">Membrane</keyword>
<keyword id="KW-0602">Photosynthesis</keyword>
<keyword id="KW-0934">Plastid</keyword>
<keyword id="KW-0793">Thylakoid</keyword>
<keyword id="KW-0812">Transmembrane</keyword>
<keyword id="KW-1133">Transmembrane helix</keyword>
<evidence type="ECO:0000255" key="1">
    <source>
        <dbReference type="HAMAP-Rule" id="MF_00437"/>
    </source>
</evidence>